<protein>
    <recommendedName>
        <fullName evidence="1">RNA-binding protein Hfq</fullName>
    </recommendedName>
</protein>
<organism>
    <name type="scientific">Clostridium botulinum (strain Okra / Type B1)</name>
    <dbReference type="NCBI Taxonomy" id="498213"/>
    <lineage>
        <taxon>Bacteria</taxon>
        <taxon>Bacillati</taxon>
        <taxon>Bacillota</taxon>
        <taxon>Clostridia</taxon>
        <taxon>Eubacteriales</taxon>
        <taxon>Clostridiaceae</taxon>
        <taxon>Clostridium</taxon>
    </lineage>
</organism>
<sequence length="85" mass="9664">MTKVVNNLQDIFLNGARKNRIPVTIYLTNGFQLKGFVKGFDNFTVILDSDGKQMMIYKHAISTINPAKPLLFVQNPNGDDYKDKE</sequence>
<evidence type="ECO:0000255" key="1">
    <source>
        <dbReference type="HAMAP-Rule" id="MF_00436"/>
    </source>
</evidence>
<evidence type="ECO:0000255" key="2">
    <source>
        <dbReference type="PROSITE-ProRule" id="PRU01346"/>
    </source>
</evidence>
<feature type="chain" id="PRO_1000190318" description="RNA-binding protein Hfq">
    <location>
        <begin position="1"/>
        <end position="85"/>
    </location>
</feature>
<feature type="domain" description="Sm" evidence="2">
    <location>
        <begin position="10"/>
        <end position="70"/>
    </location>
</feature>
<proteinExistence type="inferred from homology"/>
<reference key="1">
    <citation type="journal article" date="2007" name="PLoS ONE">
        <title>Analysis of the neurotoxin complex genes in Clostridium botulinum A1-A4 and B1 strains: BoNT/A3, /Ba4 and /B1 clusters are located within plasmids.</title>
        <authorList>
            <person name="Smith T.J."/>
            <person name="Hill K.K."/>
            <person name="Foley B.T."/>
            <person name="Detter J.C."/>
            <person name="Munk A.C."/>
            <person name="Bruce D.C."/>
            <person name="Doggett N.A."/>
            <person name="Smith L.A."/>
            <person name="Marks J.D."/>
            <person name="Xie G."/>
            <person name="Brettin T.S."/>
        </authorList>
    </citation>
    <scope>NUCLEOTIDE SEQUENCE [LARGE SCALE GENOMIC DNA]</scope>
    <source>
        <strain>Okra / Type B1</strain>
    </source>
</reference>
<dbReference type="EMBL" id="CP000939">
    <property type="protein sequence ID" value="ACA45003.1"/>
    <property type="molecule type" value="Genomic_DNA"/>
</dbReference>
<dbReference type="RefSeq" id="WP_003358923.1">
    <property type="nucleotide sequence ID" value="NC_010516.1"/>
</dbReference>
<dbReference type="SMR" id="B1IM65"/>
<dbReference type="GeneID" id="92938492"/>
<dbReference type="KEGG" id="cbb:CLD_2843"/>
<dbReference type="HOGENOM" id="CLU_113688_0_2_9"/>
<dbReference type="Proteomes" id="UP000008541">
    <property type="component" value="Chromosome"/>
</dbReference>
<dbReference type="GO" id="GO:0005829">
    <property type="term" value="C:cytosol"/>
    <property type="evidence" value="ECO:0007669"/>
    <property type="project" value="TreeGrafter"/>
</dbReference>
<dbReference type="GO" id="GO:0003723">
    <property type="term" value="F:RNA binding"/>
    <property type="evidence" value="ECO:0007669"/>
    <property type="project" value="UniProtKB-UniRule"/>
</dbReference>
<dbReference type="GO" id="GO:0006355">
    <property type="term" value="P:regulation of DNA-templated transcription"/>
    <property type="evidence" value="ECO:0007669"/>
    <property type="project" value="InterPro"/>
</dbReference>
<dbReference type="GO" id="GO:0043487">
    <property type="term" value="P:regulation of RNA stability"/>
    <property type="evidence" value="ECO:0007669"/>
    <property type="project" value="TreeGrafter"/>
</dbReference>
<dbReference type="GO" id="GO:0045974">
    <property type="term" value="P:regulation of translation, ncRNA-mediated"/>
    <property type="evidence" value="ECO:0007669"/>
    <property type="project" value="TreeGrafter"/>
</dbReference>
<dbReference type="CDD" id="cd01716">
    <property type="entry name" value="Hfq"/>
    <property type="match status" value="1"/>
</dbReference>
<dbReference type="FunFam" id="2.30.30.100:FF:000012">
    <property type="entry name" value="RNA-binding protein Hfq"/>
    <property type="match status" value="1"/>
</dbReference>
<dbReference type="Gene3D" id="2.30.30.100">
    <property type="match status" value="1"/>
</dbReference>
<dbReference type="HAMAP" id="MF_00436">
    <property type="entry name" value="Hfq"/>
    <property type="match status" value="1"/>
</dbReference>
<dbReference type="InterPro" id="IPR005001">
    <property type="entry name" value="Hfq"/>
</dbReference>
<dbReference type="InterPro" id="IPR010920">
    <property type="entry name" value="LSM_dom_sf"/>
</dbReference>
<dbReference type="InterPro" id="IPR047575">
    <property type="entry name" value="Sm"/>
</dbReference>
<dbReference type="NCBIfam" id="TIGR02383">
    <property type="entry name" value="Hfq"/>
    <property type="match status" value="1"/>
</dbReference>
<dbReference type="NCBIfam" id="NF001602">
    <property type="entry name" value="PRK00395.1"/>
    <property type="match status" value="1"/>
</dbReference>
<dbReference type="PANTHER" id="PTHR34772">
    <property type="entry name" value="RNA-BINDING PROTEIN HFQ"/>
    <property type="match status" value="1"/>
</dbReference>
<dbReference type="PANTHER" id="PTHR34772:SF1">
    <property type="entry name" value="RNA-BINDING PROTEIN HFQ"/>
    <property type="match status" value="1"/>
</dbReference>
<dbReference type="Pfam" id="PF17209">
    <property type="entry name" value="Hfq"/>
    <property type="match status" value="1"/>
</dbReference>
<dbReference type="SUPFAM" id="SSF50182">
    <property type="entry name" value="Sm-like ribonucleoproteins"/>
    <property type="match status" value="1"/>
</dbReference>
<dbReference type="PROSITE" id="PS52002">
    <property type="entry name" value="SM"/>
    <property type="match status" value="1"/>
</dbReference>
<gene>
    <name evidence="1" type="primary">hfq</name>
    <name type="ordered locus">CLD_2843</name>
</gene>
<comment type="function">
    <text evidence="1">RNA chaperone that binds small regulatory RNA (sRNAs) and mRNAs to facilitate mRNA translational regulation in response to envelope stress, environmental stress and changes in metabolite concentrations. Also binds with high specificity to tRNAs.</text>
</comment>
<comment type="subunit">
    <text evidence="1">Homohexamer.</text>
</comment>
<comment type="similarity">
    <text evidence="1">Belongs to the Hfq family.</text>
</comment>
<keyword id="KW-0694">RNA-binding</keyword>
<keyword id="KW-0346">Stress response</keyword>
<accession>B1IM65</accession>
<name>HFQ_CLOBK</name>